<dbReference type="EC" id="2.5.1.78" evidence="1"/>
<dbReference type="EMBL" id="AE013218">
    <property type="protein sequence ID" value="AAM67986.1"/>
    <property type="molecule type" value="Genomic_DNA"/>
</dbReference>
<dbReference type="RefSeq" id="WP_011053953.1">
    <property type="nucleotide sequence ID" value="NC_004061.1"/>
</dbReference>
<dbReference type="SMR" id="Q8K9A6"/>
<dbReference type="STRING" id="198804.BUsg_443"/>
<dbReference type="GeneID" id="93003916"/>
<dbReference type="KEGG" id="bas:BUsg_443"/>
<dbReference type="eggNOG" id="COG0054">
    <property type="taxonomic scope" value="Bacteria"/>
</dbReference>
<dbReference type="HOGENOM" id="CLU_089358_1_1_6"/>
<dbReference type="BRENDA" id="2.5.1.78">
    <property type="organism ID" value="1015"/>
</dbReference>
<dbReference type="UniPathway" id="UPA00275">
    <property type="reaction ID" value="UER00404"/>
</dbReference>
<dbReference type="Proteomes" id="UP000000416">
    <property type="component" value="Chromosome"/>
</dbReference>
<dbReference type="GO" id="GO:0005829">
    <property type="term" value="C:cytosol"/>
    <property type="evidence" value="ECO:0007669"/>
    <property type="project" value="TreeGrafter"/>
</dbReference>
<dbReference type="GO" id="GO:0009349">
    <property type="term" value="C:riboflavin synthase complex"/>
    <property type="evidence" value="ECO:0007669"/>
    <property type="project" value="InterPro"/>
</dbReference>
<dbReference type="GO" id="GO:0000906">
    <property type="term" value="F:6,7-dimethyl-8-ribityllumazine synthase activity"/>
    <property type="evidence" value="ECO:0007669"/>
    <property type="project" value="UniProtKB-UniRule"/>
</dbReference>
<dbReference type="GO" id="GO:0009231">
    <property type="term" value="P:riboflavin biosynthetic process"/>
    <property type="evidence" value="ECO:0007669"/>
    <property type="project" value="UniProtKB-UniRule"/>
</dbReference>
<dbReference type="CDD" id="cd09209">
    <property type="entry name" value="Lumazine_synthase-I"/>
    <property type="match status" value="1"/>
</dbReference>
<dbReference type="Gene3D" id="3.40.50.960">
    <property type="entry name" value="Lumazine/riboflavin synthase"/>
    <property type="match status" value="1"/>
</dbReference>
<dbReference type="HAMAP" id="MF_00178">
    <property type="entry name" value="Lumazine_synth"/>
    <property type="match status" value="1"/>
</dbReference>
<dbReference type="InterPro" id="IPR034964">
    <property type="entry name" value="LS"/>
</dbReference>
<dbReference type="InterPro" id="IPR002180">
    <property type="entry name" value="LS/RS"/>
</dbReference>
<dbReference type="InterPro" id="IPR036467">
    <property type="entry name" value="LS/RS_sf"/>
</dbReference>
<dbReference type="NCBIfam" id="TIGR00114">
    <property type="entry name" value="lumazine-synth"/>
    <property type="match status" value="1"/>
</dbReference>
<dbReference type="NCBIfam" id="NF000812">
    <property type="entry name" value="PRK00061.1-4"/>
    <property type="match status" value="1"/>
</dbReference>
<dbReference type="PANTHER" id="PTHR21058:SF0">
    <property type="entry name" value="6,7-DIMETHYL-8-RIBITYLLUMAZINE SYNTHASE"/>
    <property type="match status" value="1"/>
</dbReference>
<dbReference type="PANTHER" id="PTHR21058">
    <property type="entry name" value="6,7-DIMETHYL-8-RIBITYLLUMAZINE SYNTHASE DMRL SYNTHASE LUMAZINE SYNTHASE"/>
    <property type="match status" value="1"/>
</dbReference>
<dbReference type="Pfam" id="PF00885">
    <property type="entry name" value="DMRL_synthase"/>
    <property type="match status" value="1"/>
</dbReference>
<dbReference type="SUPFAM" id="SSF52121">
    <property type="entry name" value="Lumazine synthase"/>
    <property type="match status" value="1"/>
</dbReference>
<gene>
    <name evidence="1" type="primary">ribH</name>
    <name type="ordered locus">BUsg_443</name>
</gene>
<accession>Q8K9A6</accession>
<comment type="function">
    <text evidence="1">Catalyzes the formation of 6,7-dimethyl-8-ribityllumazine by condensation of 5-amino-6-(D-ribitylamino)uracil with 3,4-dihydroxy-2-butanone 4-phosphate. This is the penultimate step in the biosynthesis of riboflavin.</text>
</comment>
<comment type="catalytic activity">
    <reaction evidence="1">
        <text>(2S)-2-hydroxy-3-oxobutyl phosphate + 5-amino-6-(D-ribitylamino)uracil = 6,7-dimethyl-8-(1-D-ribityl)lumazine + phosphate + 2 H2O + H(+)</text>
        <dbReference type="Rhea" id="RHEA:26152"/>
        <dbReference type="ChEBI" id="CHEBI:15377"/>
        <dbReference type="ChEBI" id="CHEBI:15378"/>
        <dbReference type="ChEBI" id="CHEBI:15934"/>
        <dbReference type="ChEBI" id="CHEBI:43474"/>
        <dbReference type="ChEBI" id="CHEBI:58201"/>
        <dbReference type="ChEBI" id="CHEBI:58830"/>
        <dbReference type="EC" id="2.5.1.78"/>
    </reaction>
</comment>
<comment type="pathway">
    <text evidence="1">Cofactor biosynthesis; riboflavin biosynthesis; riboflavin from 2-hydroxy-3-oxobutyl phosphate and 5-amino-6-(D-ribitylamino)uracil: step 1/2.</text>
</comment>
<comment type="subunit">
    <text evidence="1">Forms an icosahedral capsid composed of 60 subunits, arranged as a dodecamer of pentamers.</text>
</comment>
<comment type="similarity">
    <text evidence="1">Belongs to the DMRL synthase family.</text>
</comment>
<protein>
    <recommendedName>
        <fullName evidence="1">6,7-dimethyl-8-ribityllumazine synthase</fullName>
        <shortName evidence="1">DMRL synthase</shortName>
        <shortName evidence="1">LS</shortName>
        <shortName evidence="1">Lumazine synthase</shortName>
        <ecNumber evidence="1">2.5.1.78</ecNumber>
    </recommendedName>
</protein>
<name>RISB_BUCAP</name>
<proteinExistence type="inferred from homology"/>
<organism>
    <name type="scientific">Buchnera aphidicola subsp. Schizaphis graminum (strain Sg)</name>
    <dbReference type="NCBI Taxonomy" id="198804"/>
    <lineage>
        <taxon>Bacteria</taxon>
        <taxon>Pseudomonadati</taxon>
        <taxon>Pseudomonadota</taxon>
        <taxon>Gammaproteobacteria</taxon>
        <taxon>Enterobacterales</taxon>
        <taxon>Erwiniaceae</taxon>
        <taxon>Buchnera</taxon>
    </lineage>
</organism>
<reference key="1">
    <citation type="journal article" date="2002" name="Science">
        <title>50 million years of genomic stasis in endosymbiotic bacteria.</title>
        <authorList>
            <person name="Tamas I."/>
            <person name="Klasson L."/>
            <person name="Canbaeck B."/>
            <person name="Naeslund A.K."/>
            <person name="Eriksson A.-S."/>
            <person name="Wernegreen J.J."/>
            <person name="Sandstroem J.P."/>
            <person name="Moran N.A."/>
            <person name="Andersson S.G.E."/>
        </authorList>
    </citation>
    <scope>NUCLEOTIDE SEQUENCE [LARGE SCALE GENOMIC DNA]</scope>
    <source>
        <strain>Sg</strain>
    </source>
</reference>
<feature type="chain" id="PRO_0000134731" description="6,7-dimethyl-8-ribityllumazine synthase">
    <location>
        <begin position="1"/>
        <end position="159"/>
    </location>
</feature>
<feature type="active site" description="Proton donor" evidence="1">
    <location>
        <position position="89"/>
    </location>
</feature>
<feature type="binding site" evidence="1">
    <location>
        <position position="22"/>
    </location>
    <ligand>
        <name>5-amino-6-(D-ribitylamino)uracil</name>
        <dbReference type="ChEBI" id="CHEBI:15934"/>
    </ligand>
</feature>
<feature type="binding site" evidence="1">
    <location>
        <begin position="57"/>
        <end position="59"/>
    </location>
    <ligand>
        <name>5-amino-6-(D-ribitylamino)uracil</name>
        <dbReference type="ChEBI" id="CHEBI:15934"/>
    </ligand>
</feature>
<feature type="binding site" evidence="1">
    <location>
        <begin position="81"/>
        <end position="83"/>
    </location>
    <ligand>
        <name>5-amino-6-(D-ribitylamino)uracil</name>
        <dbReference type="ChEBI" id="CHEBI:15934"/>
    </ligand>
</feature>
<feature type="binding site" evidence="1">
    <location>
        <begin position="86"/>
        <end position="87"/>
    </location>
    <ligand>
        <name>(2S)-2-hydroxy-3-oxobutyl phosphate</name>
        <dbReference type="ChEBI" id="CHEBI:58830"/>
    </ligand>
</feature>
<feature type="binding site" evidence="1">
    <location>
        <position position="114"/>
    </location>
    <ligand>
        <name>5-amino-6-(D-ribitylamino)uracil</name>
        <dbReference type="ChEBI" id="CHEBI:15934"/>
    </ligand>
</feature>
<feature type="binding site" evidence="1">
    <location>
        <position position="128"/>
    </location>
    <ligand>
        <name>(2S)-2-hydroxy-3-oxobutyl phosphate</name>
        <dbReference type="ChEBI" id="CHEBI:58830"/>
    </ligand>
</feature>
<sequence>MNIIQSGINVKNASITIIIARFNEFINKNLLSGAIDTLTRIGQIDKEKILTIYVPGTYEIPIVASYIANTNKYDAIIAIGTIIKGSTDHFKHIANDAYSNLSRISTKYFIPITMGILTTENIQQSIERSGTKMGNKGSEAALAALEMINIMKKLKKINN</sequence>
<keyword id="KW-0686">Riboflavin biosynthesis</keyword>
<keyword id="KW-0808">Transferase</keyword>
<evidence type="ECO:0000255" key="1">
    <source>
        <dbReference type="HAMAP-Rule" id="MF_00178"/>
    </source>
</evidence>